<comment type="function">
    <text evidence="5">Mimics host plant CLE extracellular signal peptides that regulate cell fate. May play a role in the differentiation or division of feeding cells (syncytia) induced in plant roots during infection.</text>
</comment>
<comment type="subcellular location">
    <subcellularLocation>
        <location evidence="1">Secreted</location>
    </subcellularLocation>
    <subcellularLocation>
        <location evidence="1">Host cytoplasm</location>
    </subcellularLocation>
    <subcellularLocation>
        <location evidence="1">Host extracellular space</location>
    </subcellularLocation>
    <subcellularLocation>
        <location evidence="1">Secreted</location>
        <location evidence="1">Extracellular space</location>
        <location evidence="1">Apoplast</location>
    </subcellularLocation>
    <text evidence="1">Present in secretory granules within the dorsal esophageal gland secretory cell and in the dorsal gland ampulla (collecting reservoir) at the base of the nematode stylet. Secreted into host root cells via the nematode stylet to transform the recipient cells into enlarged multinucleate feeding cells called giant-cells or syncytia. Secreted to the host apoplasm from its cytoplasm via a plant secretory pathway (By similarity).</text>
</comment>
<comment type="tissue specificity">
    <text evidence="5">Highly expressed exclusively within the dorsal esophageal gland cell during syncytium formation in host plants.</text>
</comment>
<comment type="developmental stage">
    <text evidence="5">Strongly up-regulated during root colonization, from the onset of syncytium formation by parasitic second-stage juveniles (pJ2) through the J3?J4 molts of sedentary life stages that become adult females.</text>
</comment>
<comment type="similarity">
    <text evidence="6">Belongs to the CLV3/ESR signal peptide family.</text>
</comment>
<accession>D1FNK2</accession>
<feature type="signal peptide" evidence="2">
    <location>
        <begin position="1"/>
        <end position="21"/>
    </location>
</feature>
<feature type="chain" id="PRO_5000539262" description="CLAVATA3/ESR (CLE)-related protein 4B-1" evidence="2">
    <location>
        <begin position="22"/>
        <end position="231"/>
    </location>
</feature>
<feature type="repeat" description="A-1">
    <location>
        <begin position="127"/>
        <end position="135"/>
    </location>
</feature>
<feature type="repeat" description="CLE-1">
    <location>
        <begin position="136"/>
        <end position="147"/>
    </location>
</feature>
<feature type="repeat" description="A-2">
    <location>
        <begin position="148"/>
        <end position="156"/>
    </location>
</feature>
<feature type="repeat" description="CLE-2">
    <location>
        <begin position="157"/>
        <end position="168"/>
    </location>
</feature>
<feature type="repeat" description="A-3">
    <location>
        <begin position="169"/>
        <end position="177"/>
    </location>
</feature>
<feature type="repeat" description="CLE-3">
    <location>
        <begin position="178"/>
        <end position="189"/>
    </location>
</feature>
<feature type="repeat" description="A-4">
    <location>
        <begin position="190"/>
        <end position="198"/>
    </location>
</feature>
<feature type="repeat" description="CLE-4">
    <location>
        <begin position="199"/>
        <end position="210"/>
    </location>
</feature>
<feature type="repeat" description="A-5">
    <location>
        <begin position="211"/>
        <end position="219"/>
    </location>
</feature>
<feature type="repeat" description="CLE-5">
    <location>
        <begin position="220"/>
        <end position="231"/>
    </location>
</feature>
<feature type="region of interest" description="Required for secretion from the host cytoplasm to the host apoplasm" evidence="1">
    <location>
        <begin position="21"/>
        <end position="83"/>
    </location>
</feature>
<feature type="region of interest" description="Disordered" evidence="4">
    <location>
        <begin position="116"/>
        <end position="231"/>
    </location>
</feature>
<feature type="region of interest" description="5 X approximate repeat A">
    <location>
        <begin position="127"/>
        <end position="219"/>
    </location>
</feature>
<feature type="region of interest" description="5 X approximate repeat CLE">
    <location>
        <begin position="136"/>
        <end position="231"/>
    </location>
</feature>
<feature type="compositionally biased region" description="Basic and acidic residues" evidence="4">
    <location>
        <begin position="125"/>
        <end position="137"/>
    </location>
</feature>
<feature type="compositionally biased region" description="Basic and acidic residues" evidence="4">
    <location>
        <begin position="144"/>
        <end position="221"/>
    </location>
</feature>
<feature type="glycosylation site" description="N-linked (GlcNAc...) asparagine" evidence="3">
    <location>
        <position position="32"/>
    </location>
</feature>
<reference key="1">
    <citation type="journal article" date="2009" name="Mol. Plant Microbe Interact.">
        <title>Structural and functional diversity of CLAVATA3/ESR (CLE)-like genes from the potato cyst nematode Globodera rostochiensis.</title>
        <authorList>
            <person name="Lu S.-W."/>
            <person name="Chen S."/>
            <person name="Wang J."/>
            <person name="Yu H."/>
            <person name="Chronis D."/>
            <person name="Mitchum M.G."/>
            <person name="Wang X."/>
        </authorList>
    </citation>
    <scope>NUCLEOTIDE SEQUENCE [GENOMIC DNA / MRNA]</scope>
    <scope>FUNCTION</scope>
    <scope>TISSUE SPECIFICITY</scope>
    <scope>DEVELOPMENTAL STAGE</scope>
</reference>
<keyword id="KW-0052">Apoplast</keyword>
<keyword id="KW-0221">Differentiation</keyword>
<keyword id="KW-0325">Glycoprotein</keyword>
<keyword id="KW-1035">Host cytoplasm</keyword>
<keyword id="KW-1185">Reference proteome</keyword>
<keyword id="KW-0677">Repeat</keyword>
<keyword id="KW-0964">Secreted</keyword>
<keyword id="KW-0732">Signal</keyword>
<gene>
    <name type="primary">CLE-4B-1</name>
</gene>
<protein>
    <recommendedName>
        <fullName>CLAVATA3/ESR (CLE)-related protein 4B-1</fullName>
    </recommendedName>
</protein>
<organism>
    <name type="scientific">Globodera rostochiensis</name>
    <name type="common">Golden nematode worm</name>
    <name type="synonym">Heterodera rostochiensis</name>
    <dbReference type="NCBI Taxonomy" id="31243"/>
    <lineage>
        <taxon>Eukaryota</taxon>
        <taxon>Metazoa</taxon>
        <taxon>Ecdysozoa</taxon>
        <taxon>Nematoda</taxon>
        <taxon>Chromadorea</taxon>
        <taxon>Rhabditida</taxon>
        <taxon>Tylenchina</taxon>
        <taxon>Tylenchomorpha</taxon>
        <taxon>Tylenchoidea</taxon>
        <taxon>Heteroderidae</taxon>
        <taxon>Heteroderinae</taxon>
        <taxon>Globodera</taxon>
    </lineage>
</organism>
<dbReference type="EMBL" id="EU386834">
    <property type="protein sequence ID" value="ACY70453.1"/>
    <property type="molecule type" value="mRNA"/>
</dbReference>
<dbReference type="EMBL" id="EU386841">
    <property type="protein sequence ID" value="ACY70460.1"/>
    <property type="molecule type" value="Genomic_DNA"/>
</dbReference>
<dbReference type="GlyCosmos" id="D1FNK2">
    <property type="glycosylation" value="1 site, No reported glycans"/>
</dbReference>
<dbReference type="Proteomes" id="UP000887572">
    <property type="component" value="Unplaced"/>
</dbReference>
<dbReference type="GO" id="GO:0005576">
    <property type="term" value="C:extracellular region"/>
    <property type="evidence" value="ECO:0007669"/>
    <property type="project" value="UniProtKB-SubCell"/>
</dbReference>
<dbReference type="GO" id="GO:0030430">
    <property type="term" value="C:host cell cytoplasm"/>
    <property type="evidence" value="ECO:0007669"/>
    <property type="project" value="UniProtKB-SubCell"/>
</dbReference>
<dbReference type="GO" id="GO:0043655">
    <property type="term" value="C:host extracellular space"/>
    <property type="evidence" value="ECO:0007669"/>
    <property type="project" value="UniProtKB-SubCell"/>
</dbReference>
<dbReference type="GO" id="GO:0033612">
    <property type="term" value="F:receptor serine/threonine kinase binding"/>
    <property type="evidence" value="ECO:0007669"/>
    <property type="project" value="InterPro"/>
</dbReference>
<dbReference type="GO" id="GO:0030154">
    <property type="term" value="P:cell differentiation"/>
    <property type="evidence" value="ECO:0007669"/>
    <property type="project" value="UniProtKB-KW"/>
</dbReference>
<dbReference type="InterPro" id="IPR044962">
    <property type="entry name" value="CLV3/ESR"/>
</dbReference>
<dbReference type="PANTHER" id="PTHR36349">
    <property type="entry name" value="PROTEIN CLAVATA 3"/>
    <property type="match status" value="1"/>
</dbReference>
<dbReference type="PANTHER" id="PTHR36349:SF2">
    <property type="entry name" value="PROTEIN CLAVATA 3"/>
    <property type="match status" value="1"/>
</dbReference>
<sequence length="231" mass="25275">MATNTMLCLLILSVVLALAFATNKKGDEEPENHSTGIFGKVGRVVTVALAMSSRLGGADATRGGGAVYGGNLKSNLLPNNNWMAPPPPMAMRSAKVYDSKHSPAEYLKKFAQDFRRKTGMHSQRHHEETTLEQEKRVAGAGPDPIHHQDTTLEQEKRAVPAGPDPKHHEETTLEQEKRAVPAGPDPKHHEETTLEQEKRAVPAGPDPKHHEETTFEQEKRGAPAGPDPIHH</sequence>
<evidence type="ECO:0000250" key="1"/>
<evidence type="ECO:0000255" key="2"/>
<evidence type="ECO:0000255" key="3">
    <source>
        <dbReference type="PROSITE-ProRule" id="PRU00498"/>
    </source>
</evidence>
<evidence type="ECO:0000256" key="4">
    <source>
        <dbReference type="SAM" id="MobiDB-lite"/>
    </source>
</evidence>
<evidence type="ECO:0000269" key="5">
    <source>
    </source>
</evidence>
<evidence type="ECO:0000305" key="6"/>
<name>CL4B1_GLORO</name>
<proteinExistence type="evidence at transcript level"/>